<accession>Q88PJ7</accession>
<reference key="1">
    <citation type="journal article" date="2002" name="Environ. Microbiol.">
        <title>Complete genome sequence and comparative analysis of the metabolically versatile Pseudomonas putida KT2440.</title>
        <authorList>
            <person name="Nelson K.E."/>
            <person name="Weinel C."/>
            <person name="Paulsen I.T."/>
            <person name="Dodson R.J."/>
            <person name="Hilbert H."/>
            <person name="Martins dos Santos V.A.P."/>
            <person name="Fouts D.E."/>
            <person name="Gill S.R."/>
            <person name="Pop M."/>
            <person name="Holmes M."/>
            <person name="Brinkac L.M."/>
            <person name="Beanan M.J."/>
            <person name="DeBoy R.T."/>
            <person name="Daugherty S.C."/>
            <person name="Kolonay J.F."/>
            <person name="Madupu R."/>
            <person name="Nelson W.C."/>
            <person name="White O."/>
            <person name="Peterson J.D."/>
            <person name="Khouri H.M."/>
            <person name="Hance I."/>
            <person name="Chris Lee P."/>
            <person name="Holtzapple E.K."/>
            <person name="Scanlan D."/>
            <person name="Tran K."/>
            <person name="Moazzez A."/>
            <person name="Utterback T.R."/>
            <person name="Rizzo M."/>
            <person name="Lee K."/>
            <person name="Kosack D."/>
            <person name="Moestl D."/>
            <person name="Wedler H."/>
            <person name="Lauber J."/>
            <person name="Stjepandic D."/>
            <person name="Hoheisel J."/>
            <person name="Straetz M."/>
            <person name="Heim S."/>
            <person name="Kiewitz C."/>
            <person name="Eisen J.A."/>
            <person name="Timmis K.N."/>
            <person name="Duesterhoeft A."/>
            <person name="Tuemmler B."/>
            <person name="Fraser C.M."/>
        </authorList>
    </citation>
    <scope>NUCLEOTIDE SEQUENCE [LARGE SCALE GENOMIC DNA]</scope>
    <source>
        <strain>ATCC 47054 / DSM 6125 / CFBP 8728 / NCIMB 11950 / KT2440</strain>
    </source>
</reference>
<sequence>MHGESPIKRRESRKIWVGNVPVGGDAPIAVQSMTNTDTNDVAATVAQIQRLVDAGVDIVRVSVPDMDAAEAFGKIKQRVSVPLVADIHFDYKIALRVAELGVDCLRINPGNIGREDRVRAVVDAARDRGIPIRIGVNAGSLEKDLQKKYGEPTPAALVESALRHVEHLDRLDFQDFKVSVKASDVFMAVEAYRLLAKQIVQPLHLGITEAGGLRSGTVKSAVGLGMLLAEGIGDTIRISLAADPVEEVKVGYDILKSLHLRSRGINFIACPSCSRQNFDVVKTMNELEGRLEDLLVPLDVAVIGCVVNGPGEAKEAHVGLTGGTPNLIYIDGKPAQKLTNDNLVDELEKLIRQKAAEKAEADAALIARG</sequence>
<gene>
    <name evidence="1" type="primary">ispG</name>
    <name type="ordered locus">PP_0853</name>
</gene>
<keyword id="KW-0004">4Fe-4S</keyword>
<keyword id="KW-0408">Iron</keyword>
<keyword id="KW-0411">Iron-sulfur</keyword>
<keyword id="KW-0414">Isoprene biosynthesis</keyword>
<keyword id="KW-0479">Metal-binding</keyword>
<keyword id="KW-0560">Oxidoreductase</keyword>
<keyword id="KW-1185">Reference proteome</keyword>
<proteinExistence type="inferred from homology"/>
<comment type="function">
    <text evidence="1">Converts 2C-methyl-D-erythritol 2,4-cyclodiphosphate (ME-2,4cPP) into 1-hydroxy-2-methyl-2-(E)-butenyl 4-diphosphate.</text>
</comment>
<comment type="catalytic activity">
    <reaction evidence="1">
        <text>(2E)-4-hydroxy-3-methylbut-2-enyl diphosphate + oxidized [flavodoxin] + H2O + 2 H(+) = 2-C-methyl-D-erythritol 2,4-cyclic diphosphate + reduced [flavodoxin]</text>
        <dbReference type="Rhea" id="RHEA:43604"/>
        <dbReference type="Rhea" id="RHEA-COMP:10622"/>
        <dbReference type="Rhea" id="RHEA-COMP:10623"/>
        <dbReference type="ChEBI" id="CHEBI:15377"/>
        <dbReference type="ChEBI" id="CHEBI:15378"/>
        <dbReference type="ChEBI" id="CHEBI:57618"/>
        <dbReference type="ChEBI" id="CHEBI:58210"/>
        <dbReference type="ChEBI" id="CHEBI:58483"/>
        <dbReference type="ChEBI" id="CHEBI:128753"/>
        <dbReference type="EC" id="1.17.7.3"/>
    </reaction>
</comment>
<comment type="cofactor">
    <cofactor evidence="1">
        <name>[4Fe-4S] cluster</name>
        <dbReference type="ChEBI" id="CHEBI:49883"/>
    </cofactor>
    <text evidence="1">Binds 1 [4Fe-4S] cluster.</text>
</comment>
<comment type="pathway">
    <text evidence="1">Isoprenoid biosynthesis; isopentenyl diphosphate biosynthesis via DXP pathway; isopentenyl diphosphate from 1-deoxy-D-xylulose 5-phosphate: step 5/6.</text>
</comment>
<comment type="similarity">
    <text evidence="1">Belongs to the IspG family.</text>
</comment>
<protein>
    <recommendedName>
        <fullName evidence="1">4-hydroxy-3-methylbut-2-en-1-yl diphosphate synthase (flavodoxin)</fullName>
        <ecNumber evidence="1">1.17.7.3</ecNumber>
    </recommendedName>
    <alternativeName>
        <fullName evidence="1">1-hydroxy-2-methyl-2-(E)-butenyl 4-diphosphate synthase</fullName>
    </alternativeName>
</protein>
<evidence type="ECO:0000255" key="1">
    <source>
        <dbReference type="HAMAP-Rule" id="MF_00159"/>
    </source>
</evidence>
<feature type="chain" id="PRO_0000190619" description="4-hydroxy-3-methylbut-2-en-1-yl diphosphate synthase (flavodoxin)">
    <location>
        <begin position="1"/>
        <end position="369"/>
    </location>
</feature>
<feature type="binding site" evidence="1">
    <location>
        <position position="270"/>
    </location>
    <ligand>
        <name>[4Fe-4S] cluster</name>
        <dbReference type="ChEBI" id="CHEBI:49883"/>
    </ligand>
</feature>
<feature type="binding site" evidence="1">
    <location>
        <position position="273"/>
    </location>
    <ligand>
        <name>[4Fe-4S] cluster</name>
        <dbReference type="ChEBI" id="CHEBI:49883"/>
    </ligand>
</feature>
<feature type="binding site" evidence="1">
    <location>
        <position position="305"/>
    </location>
    <ligand>
        <name>[4Fe-4S] cluster</name>
        <dbReference type="ChEBI" id="CHEBI:49883"/>
    </ligand>
</feature>
<feature type="binding site" evidence="1">
    <location>
        <position position="312"/>
    </location>
    <ligand>
        <name>[4Fe-4S] cluster</name>
        <dbReference type="ChEBI" id="CHEBI:49883"/>
    </ligand>
</feature>
<organism>
    <name type="scientific">Pseudomonas putida (strain ATCC 47054 / DSM 6125 / CFBP 8728 / NCIMB 11950 / KT2440)</name>
    <dbReference type="NCBI Taxonomy" id="160488"/>
    <lineage>
        <taxon>Bacteria</taxon>
        <taxon>Pseudomonadati</taxon>
        <taxon>Pseudomonadota</taxon>
        <taxon>Gammaproteobacteria</taxon>
        <taxon>Pseudomonadales</taxon>
        <taxon>Pseudomonadaceae</taxon>
        <taxon>Pseudomonas</taxon>
    </lineage>
</organism>
<dbReference type="EC" id="1.17.7.3" evidence="1"/>
<dbReference type="EMBL" id="AE015451">
    <property type="protein sequence ID" value="AAN66478.1"/>
    <property type="molecule type" value="Genomic_DNA"/>
</dbReference>
<dbReference type="RefSeq" id="NP_743014.1">
    <property type="nucleotide sequence ID" value="NC_002947.4"/>
</dbReference>
<dbReference type="RefSeq" id="WP_010952070.1">
    <property type="nucleotide sequence ID" value="NZ_CP169744.1"/>
</dbReference>
<dbReference type="SMR" id="Q88PJ7"/>
<dbReference type="STRING" id="160488.PP_0853"/>
<dbReference type="PaxDb" id="160488-PP_0853"/>
<dbReference type="GeneID" id="83678206"/>
<dbReference type="KEGG" id="ppu:PP_0853"/>
<dbReference type="PATRIC" id="fig|160488.4.peg.914"/>
<dbReference type="eggNOG" id="COG0821">
    <property type="taxonomic scope" value="Bacteria"/>
</dbReference>
<dbReference type="HOGENOM" id="CLU_042258_0_0_6"/>
<dbReference type="OrthoDB" id="9803214at2"/>
<dbReference type="PhylomeDB" id="Q88PJ7"/>
<dbReference type="BioCyc" id="PPUT160488:G1G01-928-MONOMER"/>
<dbReference type="UniPathway" id="UPA00056">
    <property type="reaction ID" value="UER00096"/>
</dbReference>
<dbReference type="Proteomes" id="UP000000556">
    <property type="component" value="Chromosome"/>
</dbReference>
<dbReference type="GO" id="GO:0051539">
    <property type="term" value="F:4 iron, 4 sulfur cluster binding"/>
    <property type="evidence" value="ECO:0007669"/>
    <property type="project" value="UniProtKB-UniRule"/>
</dbReference>
<dbReference type="GO" id="GO:0046429">
    <property type="term" value="F:4-hydroxy-3-methylbut-2-en-1-yl diphosphate synthase activity (ferredoxin)"/>
    <property type="evidence" value="ECO:0007669"/>
    <property type="project" value="UniProtKB-UniRule"/>
</dbReference>
<dbReference type="GO" id="GO:0141197">
    <property type="term" value="F:4-hydroxy-3-methylbut-2-enyl-diphosphate synthase activity (flavodoxin)"/>
    <property type="evidence" value="ECO:0007669"/>
    <property type="project" value="UniProtKB-EC"/>
</dbReference>
<dbReference type="GO" id="GO:0005506">
    <property type="term" value="F:iron ion binding"/>
    <property type="evidence" value="ECO:0007669"/>
    <property type="project" value="InterPro"/>
</dbReference>
<dbReference type="GO" id="GO:0019288">
    <property type="term" value="P:isopentenyl diphosphate biosynthetic process, methylerythritol 4-phosphate pathway"/>
    <property type="evidence" value="ECO:0007669"/>
    <property type="project" value="UniProtKB-UniRule"/>
</dbReference>
<dbReference type="GO" id="GO:0016114">
    <property type="term" value="P:terpenoid biosynthetic process"/>
    <property type="evidence" value="ECO:0007669"/>
    <property type="project" value="InterPro"/>
</dbReference>
<dbReference type="FunFam" id="3.20.20.20:FF:000001">
    <property type="entry name" value="4-hydroxy-3-methylbut-2-en-1-yl diphosphate synthase (flavodoxin)"/>
    <property type="match status" value="1"/>
</dbReference>
<dbReference type="Gene3D" id="3.20.20.20">
    <property type="entry name" value="Dihydropteroate synthase-like"/>
    <property type="match status" value="1"/>
</dbReference>
<dbReference type="Gene3D" id="3.30.413.10">
    <property type="entry name" value="Sulfite Reductase Hemoprotein, domain 1"/>
    <property type="match status" value="1"/>
</dbReference>
<dbReference type="HAMAP" id="MF_00159">
    <property type="entry name" value="IspG"/>
    <property type="match status" value="1"/>
</dbReference>
<dbReference type="InterPro" id="IPR011005">
    <property type="entry name" value="Dihydropteroate_synth-like_sf"/>
</dbReference>
<dbReference type="InterPro" id="IPR016425">
    <property type="entry name" value="IspG_bac"/>
</dbReference>
<dbReference type="InterPro" id="IPR004588">
    <property type="entry name" value="IspG_bac-typ"/>
</dbReference>
<dbReference type="InterPro" id="IPR045854">
    <property type="entry name" value="NO2/SO3_Rdtase_4Fe4S_sf"/>
</dbReference>
<dbReference type="NCBIfam" id="TIGR00612">
    <property type="entry name" value="ispG_gcpE"/>
    <property type="match status" value="1"/>
</dbReference>
<dbReference type="NCBIfam" id="NF001540">
    <property type="entry name" value="PRK00366.1"/>
    <property type="match status" value="1"/>
</dbReference>
<dbReference type="PANTHER" id="PTHR30454">
    <property type="entry name" value="4-HYDROXY-3-METHYLBUT-2-EN-1-YL DIPHOSPHATE SYNTHASE"/>
    <property type="match status" value="1"/>
</dbReference>
<dbReference type="PANTHER" id="PTHR30454:SF0">
    <property type="entry name" value="4-HYDROXY-3-METHYLBUT-2-EN-1-YL DIPHOSPHATE SYNTHASE (FERREDOXIN), CHLOROPLASTIC"/>
    <property type="match status" value="1"/>
</dbReference>
<dbReference type="Pfam" id="PF04551">
    <property type="entry name" value="GcpE"/>
    <property type="match status" value="1"/>
</dbReference>
<dbReference type="PIRSF" id="PIRSF004640">
    <property type="entry name" value="IspG"/>
    <property type="match status" value="1"/>
</dbReference>
<dbReference type="SUPFAM" id="SSF51412">
    <property type="entry name" value="Inosine monophosphate dehydrogenase (IMPDH)"/>
    <property type="match status" value="1"/>
</dbReference>
<dbReference type="SUPFAM" id="SSF56014">
    <property type="entry name" value="Nitrite and sulphite reductase 4Fe-4S domain-like"/>
    <property type="match status" value="1"/>
</dbReference>
<name>ISPG_PSEPK</name>